<name>MINE_DESHY</name>
<dbReference type="EMBL" id="AP008230">
    <property type="protein sequence ID" value="BAE84962.1"/>
    <property type="molecule type" value="Genomic_DNA"/>
</dbReference>
<dbReference type="RefSeq" id="WP_005816777.1">
    <property type="nucleotide sequence ID" value="NC_007907.1"/>
</dbReference>
<dbReference type="SMR" id="Q24SN0"/>
<dbReference type="STRING" id="138119.DSY3173"/>
<dbReference type="KEGG" id="dsy:DSY3173"/>
<dbReference type="eggNOG" id="COG0851">
    <property type="taxonomic scope" value="Bacteria"/>
</dbReference>
<dbReference type="HOGENOM" id="CLU_137929_1_1_9"/>
<dbReference type="Proteomes" id="UP000001946">
    <property type="component" value="Chromosome"/>
</dbReference>
<dbReference type="GO" id="GO:0051301">
    <property type="term" value="P:cell division"/>
    <property type="evidence" value="ECO:0007669"/>
    <property type="project" value="UniProtKB-KW"/>
</dbReference>
<dbReference type="GO" id="GO:0032955">
    <property type="term" value="P:regulation of division septum assembly"/>
    <property type="evidence" value="ECO:0007669"/>
    <property type="project" value="InterPro"/>
</dbReference>
<dbReference type="Gene3D" id="3.30.1070.10">
    <property type="entry name" value="Cell division topological specificity factor MinE"/>
    <property type="match status" value="1"/>
</dbReference>
<dbReference type="HAMAP" id="MF_00262">
    <property type="entry name" value="MinE"/>
    <property type="match status" value="1"/>
</dbReference>
<dbReference type="InterPro" id="IPR005527">
    <property type="entry name" value="MinE"/>
</dbReference>
<dbReference type="InterPro" id="IPR036707">
    <property type="entry name" value="MinE_sf"/>
</dbReference>
<dbReference type="NCBIfam" id="TIGR01215">
    <property type="entry name" value="minE"/>
    <property type="match status" value="1"/>
</dbReference>
<dbReference type="Pfam" id="PF03776">
    <property type="entry name" value="MinE"/>
    <property type="match status" value="1"/>
</dbReference>
<dbReference type="SUPFAM" id="SSF55229">
    <property type="entry name" value="Cell division protein MinE topological specificity domain"/>
    <property type="match status" value="1"/>
</dbReference>
<reference key="1">
    <citation type="journal article" date="2006" name="J. Bacteriol.">
        <title>Complete genome sequence of the dehalorespiring bacterium Desulfitobacterium hafniense Y51 and comparison with Dehalococcoides ethenogenes 195.</title>
        <authorList>
            <person name="Nonaka H."/>
            <person name="Keresztes G."/>
            <person name="Shinoda Y."/>
            <person name="Ikenaga Y."/>
            <person name="Abe M."/>
            <person name="Naito K."/>
            <person name="Inatomi K."/>
            <person name="Furukawa K."/>
            <person name="Inui M."/>
            <person name="Yukawa H."/>
        </authorList>
    </citation>
    <scope>NUCLEOTIDE SEQUENCE [LARGE SCALE GENOMIC DNA]</scope>
    <source>
        <strain>Y51</strain>
    </source>
</reference>
<protein>
    <recommendedName>
        <fullName evidence="1">Cell division topological specificity factor</fullName>
    </recommendedName>
</protein>
<organism>
    <name type="scientific">Desulfitobacterium hafniense (strain Y51)</name>
    <dbReference type="NCBI Taxonomy" id="138119"/>
    <lineage>
        <taxon>Bacteria</taxon>
        <taxon>Bacillati</taxon>
        <taxon>Bacillota</taxon>
        <taxon>Clostridia</taxon>
        <taxon>Eubacteriales</taxon>
        <taxon>Desulfitobacteriaceae</taxon>
        <taxon>Desulfitobacterium</taxon>
    </lineage>
</organism>
<feature type="chain" id="PRO_0000298108" description="Cell division topological specificity factor">
    <location>
        <begin position="1"/>
        <end position="91"/>
    </location>
</feature>
<accession>Q24SN0</accession>
<sequence>MLEFISRMLGKEPASKNVAKERLRLVLVHDRATISPHMLNQLKEDLIKVISNYMEIDEGALEVNLNQDDREVALIANIPVIKMKRDYSVKG</sequence>
<keyword id="KW-0131">Cell cycle</keyword>
<keyword id="KW-0132">Cell division</keyword>
<keyword id="KW-1185">Reference proteome</keyword>
<proteinExistence type="inferred from homology"/>
<comment type="function">
    <text evidence="1">Prevents the cell division inhibition by proteins MinC and MinD at internal division sites while permitting inhibition at polar sites. This ensures cell division at the proper site by restricting the formation of a division septum at the midpoint of the long axis of the cell.</text>
</comment>
<comment type="similarity">
    <text evidence="1">Belongs to the MinE family.</text>
</comment>
<gene>
    <name evidence="1" type="primary">minE</name>
    <name type="ordered locus">DSY3173</name>
</gene>
<evidence type="ECO:0000255" key="1">
    <source>
        <dbReference type="HAMAP-Rule" id="MF_00262"/>
    </source>
</evidence>